<keyword id="KW-0067">ATP-binding</keyword>
<keyword id="KW-0997">Cell inner membrane</keyword>
<keyword id="KW-1003">Cell membrane</keyword>
<keyword id="KW-0472">Membrane</keyword>
<keyword id="KW-0547">Nucleotide-binding</keyword>
<keyword id="KW-1185">Reference proteome</keyword>
<keyword id="KW-1278">Translocase</keyword>
<keyword id="KW-0813">Transport</keyword>
<protein>
    <recommendedName>
        <fullName evidence="1">Taurine import ATP-binding protein TauB</fullName>
        <ecNumber evidence="1">7.6.2.7</ecNumber>
    </recommendedName>
</protein>
<feature type="chain" id="PRO_0000093012" description="Taurine import ATP-binding protein TauB">
    <location>
        <begin position="1"/>
        <end position="262"/>
    </location>
</feature>
<feature type="domain" description="ABC transporter" evidence="1">
    <location>
        <begin position="4"/>
        <end position="233"/>
    </location>
</feature>
<feature type="binding site" evidence="1">
    <location>
        <begin position="38"/>
        <end position="45"/>
    </location>
    <ligand>
        <name>ATP</name>
        <dbReference type="ChEBI" id="CHEBI:30616"/>
    </ligand>
</feature>
<sequence length="262" mass="28444">MALLELERISAQYPGASTPVLADINLSLGPRQLLVALGPSGSGKTSLLNLIAGFVAPSGGHITLDGVPVQGPGAERGVVFQDDALLPWQNVLGNVAFGLELAGVPRAQREAKAREMLTLVDLDGFGERRIWQLSGGQKQRVGLARALAADPRVLLMDEPFGALDAFTREQMQELLLQVWQRTAKPVFLITHDIEEAVFLASELVLLAPNPGRVVERLQLNFGQRYAAGESARAIKSDPAFIETREHVLARVFSQRQSLQERA</sequence>
<name>TAUB_PSEPK</name>
<gene>
    <name evidence="1" type="primary">tauB</name>
    <name type="ordered locus">PP_0232</name>
</gene>
<proteinExistence type="inferred from homology"/>
<comment type="function">
    <text evidence="1">Part of the ABC transporter complex TauABC involved in taurine import. Responsible for energy coupling to the transport system.</text>
</comment>
<comment type="catalytic activity">
    <reaction evidence="1">
        <text>taurine(out) + ATP + H2O = taurine(in) + ADP + phosphate + H(+)</text>
        <dbReference type="Rhea" id="RHEA:14613"/>
        <dbReference type="ChEBI" id="CHEBI:15377"/>
        <dbReference type="ChEBI" id="CHEBI:15378"/>
        <dbReference type="ChEBI" id="CHEBI:30616"/>
        <dbReference type="ChEBI" id="CHEBI:43474"/>
        <dbReference type="ChEBI" id="CHEBI:456216"/>
        <dbReference type="ChEBI" id="CHEBI:507393"/>
        <dbReference type="EC" id="7.6.2.7"/>
    </reaction>
</comment>
<comment type="subunit">
    <text evidence="1">The complex is composed of two ATP-binding proteins (TauB), two transmembrane proteins (TauC) and a solute-binding protein (TauA).</text>
</comment>
<comment type="subcellular location">
    <subcellularLocation>
        <location evidence="1">Cell inner membrane</location>
        <topology evidence="1">Peripheral membrane protein</topology>
    </subcellularLocation>
</comment>
<comment type="similarity">
    <text evidence="1">Belongs to the ABC transporter superfamily. Taurine importer (TC 3.A.1.17.1) family.</text>
</comment>
<organism>
    <name type="scientific">Pseudomonas putida (strain ATCC 47054 / DSM 6125 / CFBP 8728 / NCIMB 11950 / KT2440)</name>
    <dbReference type="NCBI Taxonomy" id="160488"/>
    <lineage>
        <taxon>Bacteria</taxon>
        <taxon>Pseudomonadati</taxon>
        <taxon>Pseudomonadota</taxon>
        <taxon>Gammaproteobacteria</taxon>
        <taxon>Pseudomonadales</taxon>
        <taxon>Pseudomonadaceae</taxon>
        <taxon>Pseudomonas</taxon>
    </lineage>
</organism>
<dbReference type="EC" id="7.6.2.7" evidence="1"/>
<dbReference type="EMBL" id="AE015451">
    <property type="protein sequence ID" value="AAN65864.1"/>
    <property type="molecule type" value="Genomic_DNA"/>
</dbReference>
<dbReference type="RefSeq" id="NP_742400.1">
    <property type="nucleotide sequence ID" value="NC_002947.4"/>
</dbReference>
<dbReference type="RefSeq" id="WP_010951613.1">
    <property type="nucleotide sequence ID" value="NZ_CP169744.1"/>
</dbReference>
<dbReference type="SMR" id="Q88RA1"/>
<dbReference type="STRING" id="160488.PP_0232"/>
<dbReference type="PaxDb" id="160488-PP_0232"/>
<dbReference type="GeneID" id="83677492"/>
<dbReference type="KEGG" id="ppu:PP_0232"/>
<dbReference type="PATRIC" id="fig|160488.4.peg.248"/>
<dbReference type="eggNOG" id="COG4525">
    <property type="taxonomic scope" value="Bacteria"/>
</dbReference>
<dbReference type="HOGENOM" id="CLU_000604_1_22_6"/>
<dbReference type="OrthoDB" id="9802264at2"/>
<dbReference type="PhylomeDB" id="Q88RA1"/>
<dbReference type="BioCyc" id="PPUT160488:G1G01-254-MONOMER"/>
<dbReference type="Proteomes" id="UP000000556">
    <property type="component" value="Chromosome"/>
</dbReference>
<dbReference type="GO" id="GO:0005886">
    <property type="term" value="C:plasma membrane"/>
    <property type="evidence" value="ECO:0007669"/>
    <property type="project" value="UniProtKB-SubCell"/>
</dbReference>
<dbReference type="GO" id="GO:0015411">
    <property type="term" value="F:ABC-type taurine transporter transporter activity"/>
    <property type="evidence" value="ECO:0007669"/>
    <property type="project" value="UniProtKB-EC"/>
</dbReference>
<dbReference type="GO" id="GO:0005524">
    <property type="term" value="F:ATP binding"/>
    <property type="evidence" value="ECO:0007669"/>
    <property type="project" value="UniProtKB-KW"/>
</dbReference>
<dbReference type="GO" id="GO:0016887">
    <property type="term" value="F:ATP hydrolysis activity"/>
    <property type="evidence" value="ECO:0007669"/>
    <property type="project" value="InterPro"/>
</dbReference>
<dbReference type="CDD" id="cd03293">
    <property type="entry name" value="ABC_NrtD_SsuB_transporters"/>
    <property type="match status" value="1"/>
</dbReference>
<dbReference type="Gene3D" id="3.40.50.300">
    <property type="entry name" value="P-loop containing nucleotide triphosphate hydrolases"/>
    <property type="match status" value="1"/>
</dbReference>
<dbReference type="InterPro" id="IPR003593">
    <property type="entry name" value="AAA+_ATPase"/>
</dbReference>
<dbReference type="InterPro" id="IPR003439">
    <property type="entry name" value="ABC_transporter-like_ATP-bd"/>
</dbReference>
<dbReference type="InterPro" id="IPR017871">
    <property type="entry name" value="ABC_transporter-like_CS"/>
</dbReference>
<dbReference type="InterPro" id="IPR050166">
    <property type="entry name" value="ABC_transporter_ATP-bind"/>
</dbReference>
<dbReference type="InterPro" id="IPR027417">
    <property type="entry name" value="P-loop_NTPase"/>
</dbReference>
<dbReference type="NCBIfam" id="NF008421">
    <property type="entry name" value="PRK11248.1"/>
    <property type="match status" value="1"/>
</dbReference>
<dbReference type="PANTHER" id="PTHR42788:SF18">
    <property type="entry name" value="TAURINE IMPORT ATP-BINDING PROTEIN TAUB"/>
    <property type="match status" value="1"/>
</dbReference>
<dbReference type="PANTHER" id="PTHR42788">
    <property type="entry name" value="TAURINE IMPORT ATP-BINDING PROTEIN-RELATED"/>
    <property type="match status" value="1"/>
</dbReference>
<dbReference type="Pfam" id="PF00005">
    <property type="entry name" value="ABC_tran"/>
    <property type="match status" value="1"/>
</dbReference>
<dbReference type="SMART" id="SM00382">
    <property type="entry name" value="AAA"/>
    <property type="match status" value="1"/>
</dbReference>
<dbReference type="SUPFAM" id="SSF52540">
    <property type="entry name" value="P-loop containing nucleoside triphosphate hydrolases"/>
    <property type="match status" value="1"/>
</dbReference>
<dbReference type="PROSITE" id="PS00211">
    <property type="entry name" value="ABC_TRANSPORTER_1"/>
    <property type="match status" value="1"/>
</dbReference>
<dbReference type="PROSITE" id="PS50893">
    <property type="entry name" value="ABC_TRANSPORTER_2"/>
    <property type="match status" value="1"/>
</dbReference>
<dbReference type="PROSITE" id="PS51250">
    <property type="entry name" value="TAUB"/>
    <property type="match status" value="1"/>
</dbReference>
<accession>Q88RA1</accession>
<reference key="1">
    <citation type="journal article" date="2002" name="Environ. Microbiol.">
        <title>Complete genome sequence and comparative analysis of the metabolically versatile Pseudomonas putida KT2440.</title>
        <authorList>
            <person name="Nelson K.E."/>
            <person name="Weinel C."/>
            <person name="Paulsen I.T."/>
            <person name="Dodson R.J."/>
            <person name="Hilbert H."/>
            <person name="Martins dos Santos V.A.P."/>
            <person name="Fouts D.E."/>
            <person name="Gill S.R."/>
            <person name="Pop M."/>
            <person name="Holmes M."/>
            <person name="Brinkac L.M."/>
            <person name="Beanan M.J."/>
            <person name="DeBoy R.T."/>
            <person name="Daugherty S.C."/>
            <person name="Kolonay J.F."/>
            <person name="Madupu R."/>
            <person name="Nelson W.C."/>
            <person name="White O."/>
            <person name="Peterson J.D."/>
            <person name="Khouri H.M."/>
            <person name="Hance I."/>
            <person name="Chris Lee P."/>
            <person name="Holtzapple E.K."/>
            <person name="Scanlan D."/>
            <person name="Tran K."/>
            <person name="Moazzez A."/>
            <person name="Utterback T.R."/>
            <person name="Rizzo M."/>
            <person name="Lee K."/>
            <person name="Kosack D."/>
            <person name="Moestl D."/>
            <person name="Wedler H."/>
            <person name="Lauber J."/>
            <person name="Stjepandic D."/>
            <person name="Hoheisel J."/>
            <person name="Straetz M."/>
            <person name="Heim S."/>
            <person name="Kiewitz C."/>
            <person name="Eisen J.A."/>
            <person name="Timmis K.N."/>
            <person name="Duesterhoeft A."/>
            <person name="Tuemmler B."/>
            <person name="Fraser C.M."/>
        </authorList>
    </citation>
    <scope>NUCLEOTIDE SEQUENCE [LARGE SCALE GENOMIC DNA]</scope>
    <source>
        <strain>ATCC 47054 / DSM 6125 / CFBP 8728 / NCIMB 11950 / KT2440</strain>
    </source>
</reference>
<evidence type="ECO:0000255" key="1">
    <source>
        <dbReference type="HAMAP-Rule" id="MF_01714"/>
    </source>
</evidence>